<keyword id="KW-0175">Coiled coil</keyword>
<keyword id="KW-0325">Glycoprotein</keyword>
<keyword id="KW-1043">Host membrane</keyword>
<keyword id="KW-0945">Host-virus interaction</keyword>
<keyword id="KW-0472">Membrane</keyword>
<keyword id="KW-0732">Signal</keyword>
<keyword id="KW-0812">Transmembrane</keyword>
<keyword id="KW-1133">Transmembrane helix</keyword>
<keyword id="KW-1161">Viral attachment to host cell</keyword>
<keyword id="KW-0261">Viral envelope protein</keyword>
<keyword id="KW-0946">Virion</keyword>
<keyword id="KW-0843">Virulence</keyword>
<keyword id="KW-1160">Virus entry into host cell</keyword>
<reference key="1">
    <citation type="journal article" date="1990" name="Adv. Exp. Med. Biol.">
        <title>Nucleotide sequence of the E2-peplomer protein gene and partial nucleotide sequence of the upstream polymerase gene of transmissible gas gastroenteritis virus (Miller strain).</title>
        <authorList>
            <person name="Wesley R.D."/>
        </authorList>
    </citation>
    <scope>NUCLEOTIDE SEQUENCE [GENOMIC RNA]</scope>
</reference>
<proteinExistence type="inferred from homology"/>
<feature type="signal peptide" evidence="1">
    <location>
        <begin position="1"/>
        <end position="28"/>
    </location>
</feature>
<feature type="chain" id="PRO_0000037224" description="Spike glycoprotein" evidence="1">
    <location>
        <begin position="29"/>
        <end position="1449"/>
    </location>
</feature>
<feature type="topological domain" description="Virion surface" evidence="1">
    <location>
        <begin position="29"/>
        <end position="1390"/>
    </location>
</feature>
<feature type="transmembrane region" description="Helical" evidence="1">
    <location>
        <begin position="1391"/>
        <end position="1410"/>
    </location>
</feature>
<feature type="topological domain" description="Intravirion" evidence="1">
    <location>
        <begin position="1411"/>
        <end position="1449"/>
    </location>
</feature>
<feature type="region of interest" description="S1">
    <location>
        <begin position="17"/>
        <end position="776"/>
    </location>
</feature>
<feature type="region of interest" description="S1" evidence="1">
    <location>
        <begin position="29"/>
        <end position="776"/>
    </location>
</feature>
<feature type="region of interest" description="Interaction with host ANPEP" evidence="1">
    <location>
        <begin position="657"/>
        <end position="801"/>
    </location>
</feature>
<feature type="region of interest" description="S2" evidence="1">
    <location>
        <begin position="777"/>
        <end position="1449"/>
    </location>
</feature>
<feature type="region of interest" description="Fusion peptide" evidence="1">
    <location>
        <begin position="1022"/>
        <end position="1043"/>
    </location>
</feature>
<feature type="region of interest" description="Heptad repeat 1 (HR1)" evidence="2">
    <location>
        <begin position="1037"/>
        <end position="1156"/>
    </location>
</feature>
<feature type="region of interest" description="Heptad repeat 2 (HR2)" evidence="3">
    <location>
        <begin position="1305"/>
        <end position="1402"/>
    </location>
</feature>
<feature type="coiled-coil region" evidence="1">
    <location>
        <begin position="1104"/>
        <end position="1148"/>
    </location>
</feature>
<feature type="coiled-coil region" evidence="1">
    <location>
        <begin position="1338"/>
        <end position="1380"/>
    </location>
</feature>
<feature type="short sequence motif" description="KxHxx" evidence="1">
    <location>
        <begin position="1445"/>
        <end position="1449"/>
    </location>
</feature>
<organism>
    <name type="scientific">Porcine transmissible gastroenteritis coronavirus (strain Miller)</name>
    <name type="common">TGEV</name>
    <dbReference type="NCBI Taxonomy" id="33737"/>
    <lineage>
        <taxon>Viruses</taxon>
        <taxon>Riboviria</taxon>
        <taxon>Orthornavirae</taxon>
        <taxon>Pisuviricota</taxon>
        <taxon>Pisoniviricetes</taxon>
        <taxon>Nidovirales</taxon>
        <taxon>Cornidovirineae</taxon>
        <taxon>Coronaviridae</taxon>
        <taxon>Orthocoronavirinae</taxon>
        <taxon>Alphacoronavirus</taxon>
        <taxon>Tegacovirus</taxon>
        <taxon>Alphacoronavirus 1</taxon>
    </lineage>
</organism>
<evidence type="ECO:0000255" key="1">
    <source>
        <dbReference type="HAMAP-Rule" id="MF_04200"/>
    </source>
</evidence>
<evidence type="ECO:0000255" key="2">
    <source>
        <dbReference type="PROSITE-ProRule" id="PRU01271"/>
    </source>
</evidence>
<evidence type="ECO:0000255" key="3">
    <source>
        <dbReference type="PROSITE-ProRule" id="PRU01272"/>
    </source>
</evidence>
<accession>P33470</accession>
<dbReference type="EMBL" id="S51223">
    <property type="protein sequence ID" value="AAB19567.2"/>
    <property type="molecule type" value="Genomic_RNA"/>
</dbReference>
<dbReference type="PIR" id="A43573">
    <property type="entry name" value="A43573"/>
</dbReference>
<dbReference type="SMR" id="P33470"/>
<dbReference type="GO" id="GO:0044173">
    <property type="term" value="C:host cell endoplasmic reticulum-Golgi intermediate compartment membrane"/>
    <property type="evidence" value="ECO:0007669"/>
    <property type="project" value="UniProtKB-SubCell"/>
</dbReference>
<dbReference type="GO" id="GO:0016020">
    <property type="term" value="C:membrane"/>
    <property type="evidence" value="ECO:0007669"/>
    <property type="project" value="UniProtKB-UniRule"/>
</dbReference>
<dbReference type="GO" id="GO:0019031">
    <property type="term" value="C:viral envelope"/>
    <property type="evidence" value="ECO:0007669"/>
    <property type="project" value="UniProtKB-UniRule"/>
</dbReference>
<dbReference type="GO" id="GO:0055036">
    <property type="term" value="C:virion membrane"/>
    <property type="evidence" value="ECO:0007669"/>
    <property type="project" value="UniProtKB-SubCell"/>
</dbReference>
<dbReference type="GO" id="GO:0075509">
    <property type="term" value="P:endocytosis involved in viral entry into host cell"/>
    <property type="evidence" value="ECO:0007669"/>
    <property type="project" value="UniProtKB-UniRule"/>
</dbReference>
<dbReference type="GO" id="GO:0039654">
    <property type="term" value="P:fusion of virus membrane with host endosome membrane"/>
    <property type="evidence" value="ECO:0007669"/>
    <property type="project" value="UniProtKB-UniRule"/>
</dbReference>
<dbReference type="GO" id="GO:0019064">
    <property type="term" value="P:fusion of virus membrane with host plasma membrane"/>
    <property type="evidence" value="ECO:0007669"/>
    <property type="project" value="UniProtKB-UniRule"/>
</dbReference>
<dbReference type="GO" id="GO:0046813">
    <property type="term" value="P:receptor-mediated virion attachment to host cell"/>
    <property type="evidence" value="ECO:0007669"/>
    <property type="project" value="UniProtKB-UniRule"/>
</dbReference>
<dbReference type="CDD" id="cd22377">
    <property type="entry name" value="TGEV-like_Spike_SD1-2_S1-S2_S2"/>
    <property type="match status" value="1"/>
</dbReference>
<dbReference type="Gene3D" id="1.20.5.300">
    <property type="match status" value="2"/>
</dbReference>
<dbReference type="Gene3D" id="2.60.40.3130">
    <property type="match status" value="1"/>
</dbReference>
<dbReference type="HAMAP" id="MF_04200">
    <property type="entry name" value="ALPHA_CORONA_SPIKE"/>
    <property type="match status" value="1"/>
</dbReference>
<dbReference type="InterPro" id="IPR042552">
    <property type="entry name" value="ALPHA_CORONA_SPIKE"/>
</dbReference>
<dbReference type="InterPro" id="IPR043607">
    <property type="entry name" value="CoV_S1_C"/>
</dbReference>
<dbReference type="InterPro" id="IPR043473">
    <property type="entry name" value="S2_sf_CoV"/>
</dbReference>
<dbReference type="InterPro" id="IPR002551">
    <property type="entry name" value="Spike_S1_CoV"/>
</dbReference>
<dbReference type="InterPro" id="IPR002552">
    <property type="entry name" value="Spike_S2_CoV"/>
</dbReference>
<dbReference type="InterPro" id="IPR043614">
    <property type="entry name" value="Spike_S2_CoV_C"/>
</dbReference>
<dbReference type="InterPro" id="IPR044873">
    <property type="entry name" value="Spike_S2_CoV_HR1"/>
</dbReference>
<dbReference type="InterPro" id="IPR044874">
    <property type="entry name" value="Spike_S2_CoV_HR2"/>
</dbReference>
<dbReference type="Pfam" id="PF01600">
    <property type="entry name" value="CoV_S1"/>
    <property type="match status" value="1"/>
</dbReference>
<dbReference type="Pfam" id="PF19209">
    <property type="entry name" value="CoV_S1_C"/>
    <property type="match status" value="1"/>
</dbReference>
<dbReference type="Pfam" id="PF01601">
    <property type="entry name" value="CoV_S2"/>
    <property type="match status" value="1"/>
</dbReference>
<dbReference type="Pfam" id="PF19214">
    <property type="entry name" value="CoV_S2_C"/>
    <property type="match status" value="1"/>
</dbReference>
<dbReference type="SUPFAM" id="SSF111474">
    <property type="entry name" value="Coronavirus S2 glycoprotein"/>
    <property type="match status" value="2"/>
</dbReference>
<dbReference type="PROSITE" id="PS51923">
    <property type="entry name" value="COV_S2_HR1"/>
    <property type="match status" value="1"/>
</dbReference>
<dbReference type="PROSITE" id="PS51924">
    <property type="entry name" value="COV_S2_HR2"/>
    <property type="match status" value="1"/>
</dbReference>
<comment type="function">
    <text evidence="1">S1 region attaches the virion to the cell membrane by interacting with host ANPEP/aminopeptidase N, initiating the infection. Binding to the receptor probably induces conformational changes in the S glycoprotein unmasking the fusion peptide of S2 region and activating membranes fusion. S2 region belongs to the class I viral fusion protein. Under the current model, the protein has at least 3 conformational states: pre-fusion native state, pre-hairpin intermediate state, and post-fusion hairpin state. During viral and target cell membrane fusion, the coiled coil regions (heptad repeats) regions assume a trimer-of-hairpins structure, positioning the fusion peptide in close proximity to the C-terminal region of the ectodomain. The formation of this structure appears to drive apposition and subsequent fusion of viral and target cell membranes.</text>
</comment>
<comment type="subunit">
    <text evidence="1">Homotrimer. During virus morphogenesis, found in a complex with M and HE proteins. Interacts with host ANPEP.</text>
</comment>
<comment type="subcellular location">
    <subcellularLocation>
        <location evidence="1">Virion membrane</location>
        <topology evidence="1">Single-pass type I membrane protein</topology>
    </subcellularLocation>
    <subcellularLocation>
        <location evidence="1">Host endoplasmic reticulum-Golgi intermediate compartment membrane</location>
        <topology evidence="1">Single-pass type I membrane protein</topology>
    </subcellularLocation>
    <text evidence="1">Accumulates in the endoplasmic reticulum-Golgi intermediate compartment, where it participates in virus particle assembly.</text>
</comment>
<comment type="domain">
    <text evidence="1">The KxHxx motif seems to function as an ER retrieval signal.</text>
</comment>
<comment type="similarity">
    <text evidence="1">Belongs to the alphacoronaviruses spike protein family.</text>
</comment>
<comment type="caution">
    <text evidence="1">In contrast to beta- and gammacoronaviruses, S glycoprotein is not cleaved into S1 and S2.</text>
</comment>
<gene>
    <name evidence="1" type="primary">S</name>
    <name type="ORF">2</name>
</gene>
<organismHost>
    <name type="scientific">Sus scrofa</name>
    <name type="common">Pig</name>
    <dbReference type="NCBI Taxonomy" id="9823"/>
</organismHost>
<protein>
    <recommendedName>
        <fullName evidence="1">Spike glycoprotein</fullName>
        <shortName evidence="1">S glycoprotein</shortName>
    </recommendedName>
    <alternativeName>
        <fullName evidence="1">E2</fullName>
    </alternativeName>
    <alternativeName>
        <fullName evidence="1">Peplomer protein</fullName>
    </alternativeName>
</protein>
<name>SPIKE_CVPMI</name>
<sequence length="1449" mass="159916">MKKLFVVLVVMPLIYGDNFPCSKLTNRTIGNHWNLIETFLLNYSSRLSPNSDVVLGDYFPTVQPWFNCIRNNSNDLYVTLENLKALYWDYATENITLNHKQRLNVVVNGYPYSITVTTTRNFNSAEGAIICICKGSPPTTTTESSLTCNWGSECRLNHKFPICPSNSEANCGNMLYGLQWFADAVVAYLHGASYRISFENQWSGTVTLGDMRATTLETAGTLVDLWWFNPVYDVSYYRVNNKNGTTVVSNCTDQCASYVANVFTTQPGGFIPSDFSFNNWFLLTNSSTLVSGKLVTKQPLLVNCLWPVPSFEEAASTLCFEGAGFDQCNGPVLNNTVDVIRFNLNFTTNVQSGKGATVFSLNTTGGVTLEISCYNDTVSDSSFSSYGEMPFGVTDGPRYCYVLYNGTALKYLGTLPPSVKEIAISKWGHFYINGYNFFSTFPIDCISFNLTTGDSDVFWTIAYTSYTEALVQVENTAITKVTYCNSYVNNIKCSQLTANLNNGFYPVSSSEVGLVNKSVVLLPSFYTHTIVNITIGLGMKRSGYGQPIASTLSNITLPMQDNNTDVYCIRSDQFSVYVHSTCKSSLWDNVFKRNCTDVLDATAVIKTGTCPFSFDKLNNYLTFNKFCLSLSPVGANCKFDVAARTRTNDQVVRSLYVIYEEGDNIVGVPSDNSGLHDLSVLHLDSCTDYNIYGRTGVGIIRQTNRTLLSGLYYTSLSGDLLGFKNVSDGVIYSVTPCDVSAQAAVIDGTIVGAITSINSELLGLTHWTTTPNFYYYSIYNYTNDRTRGTAIDSNDVDCEPVITYSNIGVCKNGALVFINVTHSDGDVQPISTGNVTIPTNFTISVQVEYIQVYTTPVSIDCSRYVCNGNPRCNKLLTQYVSACQTIEQALAMGARLENMEVGSMLFVSENALKLASVEAFNSSETLDPIYKEWPNIGGSWLEGLKYILPSDNSKRKYRSAIEDLLFAKVVTSGLGTVDEDYKRCTGGYDIADLVCAQYYNGIMVLPGVANADKMTMYTASLAGGITLGALGGGAVAIPFAVAVQARLNYVALQTDVLNKNQQILASAFNQAIGNITQSFGKVNDAIHQTSRGLATVAKALAKVQDVVNTQGQALSHLTVQLQNNFQAISSSISDIYNRLDELSADAQVDRLITGRLTALNAFVSQTLTRQAEVRASRQLAKDKVNECVRSQSQRFGFCGNGTHLFSLANAAPNGMIFFHTVLLPTAYETVTAWAGICALDGDRTFGLVVKDVQLTLFRNLDDKFYLTPRTMYQPRVATSSDFVQIEGCDVLFVNATVSDLPSIIPDYIDINQTVQDILENFRPNWTVPELTFDIFNATYLNLTGEIDDLEFRSEKLHNTTVELAILIDNINNTLVNLEWLNRIETYVKWPWYVWLLIGLVVIFCIPLLLFCCCSTGCCGCIGCLGSCCHSICSRRQFENYEPIEKVHVH</sequence>